<name>LYSG_MYCBO</name>
<comment type="function">
    <text evidence="1">Positively regulates the expression of the exporter LysE and represses its own expression.</text>
</comment>
<comment type="subunit">
    <text evidence="1">Homodimer.</text>
</comment>
<comment type="similarity">
    <text evidence="3">Belongs to the LysR transcriptional regulatory family.</text>
</comment>
<gene>
    <name evidence="1" type="primary">lysG</name>
    <name type="ordered locus">BQ2027_MB2007C</name>
</gene>
<proteinExistence type="inferred from homology"/>
<keyword id="KW-0010">Activator</keyword>
<keyword id="KW-0238">DNA-binding</keyword>
<keyword id="KW-1185">Reference proteome</keyword>
<keyword id="KW-0678">Repressor</keyword>
<keyword id="KW-0804">Transcription</keyword>
<keyword id="KW-0805">Transcription regulation</keyword>
<sequence>MVDPQLDGPQLAALAAVVELGSFDAAAERLHVTPSAVSQRIKSLEQQVGQVLVVREKPCRATTAGIPLLRLAAQTALLESEALAEMGGNASLKRTRITIAVNADSMATWFSAVFDGLGDVLLDVRIEDQDHSARLLREGVAMGAVTTERNPVPGCRVHPLGEMRYLPVASRPFVQRHLSDGFTAAAAAKAPSLAWNRDDGLQDMLVRKAFRRAITRPTHFVPTTEGFTAAARAGLGWGMFPEKLAASPLADGSFVRVCDIHLDVPLYWQCWKLDSPIIARITDTVRAAASGLYRGQQRRRRPG</sequence>
<feature type="chain" id="PRO_0000105813" description="HTH-type transcriptional regulator LysG">
    <location>
        <begin position="1"/>
        <end position="303"/>
    </location>
</feature>
<feature type="domain" description="HTH lysR-type" evidence="2">
    <location>
        <begin position="6"/>
        <end position="62"/>
    </location>
</feature>
<feature type="DNA-binding region" description="H-T-H motif" evidence="2">
    <location>
        <begin position="23"/>
        <end position="42"/>
    </location>
</feature>
<organism>
    <name type="scientific">Mycobacterium bovis (strain ATCC BAA-935 / AF2122/97)</name>
    <dbReference type="NCBI Taxonomy" id="233413"/>
    <lineage>
        <taxon>Bacteria</taxon>
        <taxon>Bacillati</taxon>
        <taxon>Actinomycetota</taxon>
        <taxon>Actinomycetes</taxon>
        <taxon>Mycobacteriales</taxon>
        <taxon>Mycobacteriaceae</taxon>
        <taxon>Mycobacterium</taxon>
        <taxon>Mycobacterium tuberculosis complex</taxon>
    </lineage>
</organism>
<dbReference type="EMBL" id="LT708304">
    <property type="protein sequence ID" value="SIU00613.1"/>
    <property type="molecule type" value="Genomic_DNA"/>
</dbReference>
<dbReference type="RefSeq" id="NP_855657.1">
    <property type="nucleotide sequence ID" value="NC_002945.3"/>
</dbReference>
<dbReference type="RefSeq" id="WP_003409986.1">
    <property type="nucleotide sequence ID" value="NC_002945.4"/>
</dbReference>
<dbReference type="SMR" id="P67666"/>
<dbReference type="KEGG" id="mbo:BQ2027_MB2007C"/>
<dbReference type="PATRIC" id="fig|233413.5.peg.2205"/>
<dbReference type="Proteomes" id="UP000001419">
    <property type="component" value="Chromosome"/>
</dbReference>
<dbReference type="GO" id="GO:0003677">
    <property type="term" value="F:DNA binding"/>
    <property type="evidence" value="ECO:0007669"/>
    <property type="project" value="UniProtKB-KW"/>
</dbReference>
<dbReference type="GO" id="GO:0003700">
    <property type="term" value="F:DNA-binding transcription factor activity"/>
    <property type="evidence" value="ECO:0007669"/>
    <property type="project" value="InterPro"/>
</dbReference>
<dbReference type="FunFam" id="1.10.10.10:FF:000456">
    <property type="entry name" value="LysR family transcriptional regulator ArgP"/>
    <property type="match status" value="1"/>
</dbReference>
<dbReference type="Gene3D" id="3.40.190.290">
    <property type="match status" value="1"/>
</dbReference>
<dbReference type="Gene3D" id="1.10.10.10">
    <property type="entry name" value="Winged helix-like DNA-binding domain superfamily/Winged helix DNA-binding domain"/>
    <property type="match status" value="1"/>
</dbReference>
<dbReference type="InterPro" id="IPR017685">
    <property type="entry name" value="ArgP"/>
</dbReference>
<dbReference type="InterPro" id="IPR050176">
    <property type="entry name" value="LTTR"/>
</dbReference>
<dbReference type="InterPro" id="IPR005119">
    <property type="entry name" value="LysR_subst-bd"/>
</dbReference>
<dbReference type="InterPro" id="IPR000847">
    <property type="entry name" value="Tscrpt_reg_HTH_LysR"/>
</dbReference>
<dbReference type="InterPro" id="IPR036388">
    <property type="entry name" value="WH-like_DNA-bd_sf"/>
</dbReference>
<dbReference type="InterPro" id="IPR036390">
    <property type="entry name" value="WH_DNA-bd_sf"/>
</dbReference>
<dbReference type="NCBIfam" id="TIGR03298">
    <property type="entry name" value="argP"/>
    <property type="match status" value="1"/>
</dbReference>
<dbReference type="NCBIfam" id="NF002964">
    <property type="entry name" value="PRK03635.1"/>
    <property type="match status" value="1"/>
</dbReference>
<dbReference type="NCBIfam" id="NF009888">
    <property type="entry name" value="PRK13348.1"/>
    <property type="match status" value="1"/>
</dbReference>
<dbReference type="PANTHER" id="PTHR30579:SF2">
    <property type="entry name" value="HTH-TYPE TRANSCRIPTIONAL REGULATOR ARGP"/>
    <property type="match status" value="1"/>
</dbReference>
<dbReference type="PANTHER" id="PTHR30579">
    <property type="entry name" value="TRANSCRIPTIONAL REGULATOR"/>
    <property type="match status" value="1"/>
</dbReference>
<dbReference type="Pfam" id="PF00126">
    <property type="entry name" value="HTH_1"/>
    <property type="match status" value="1"/>
</dbReference>
<dbReference type="Pfam" id="PF03466">
    <property type="entry name" value="LysR_substrate"/>
    <property type="match status" value="1"/>
</dbReference>
<dbReference type="PRINTS" id="PR00039">
    <property type="entry name" value="HTHLYSR"/>
</dbReference>
<dbReference type="SUPFAM" id="SSF53850">
    <property type="entry name" value="Periplasmic binding protein-like II"/>
    <property type="match status" value="1"/>
</dbReference>
<dbReference type="SUPFAM" id="SSF46785">
    <property type="entry name" value="Winged helix' DNA-binding domain"/>
    <property type="match status" value="1"/>
</dbReference>
<dbReference type="PROSITE" id="PS50931">
    <property type="entry name" value="HTH_LYSR"/>
    <property type="match status" value="1"/>
</dbReference>
<protein>
    <recommendedName>
        <fullName evidence="1">HTH-type transcriptional regulator LysG</fullName>
    </recommendedName>
</protein>
<evidence type="ECO:0000250" key="1">
    <source>
        <dbReference type="UniProtKB" id="P9WMF5"/>
    </source>
</evidence>
<evidence type="ECO:0000255" key="2">
    <source>
        <dbReference type="PROSITE-ProRule" id="PRU00253"/>
    </source>
</evidence>
<evidence type="ECO:0000305" key="3"/>
<reference key="1">
    <citation type="journal article" date="2003" name="Proc. Natl. Acad. Sci. U.S.A.">
        <title>The complete genome sequence of Mycobacterium bovis.</title>
        <authorList>
            <person name="Garnier T."/>
            <person name="Eiglmeier K."/>
            <person name="Camus J.-C."/>
            <person name="Medina N."/>
            <person name="Mansoor H."/>
            <person name="Pryor M."/>
            <person name="Duthoy S."/>
            <person name="Grondin S."/>
            <person name="Lacroix C."/>
            <person name="Monsempe C."/>
            <person name="Simon S."/>
            <person name="Harris B."/>
            <person name="Atkin R."/>
            <person name="Doggett J."/>
            <person name="Mayes R."/>
            <person name="Keating L."/>
            <person name="Wheeler P.R."/>
            <person name="Parkhill J."/>
            <person name="Barrell B.G."/>
            <person name="Cole S.T."/>
            <person name="Gordon S.V."/>
            <person name="Hewinson R.G."/>
        </authorList>
    </citation>
    <scope>NUCLEOTIDE SEQUENCE [LARGE SCALE GENOMIC DNA]</scope>
    <source>
        <strain>ATCC BAA-935 / AF2122/97</strain>
    </source>
</reference>
<reference key="2">
    <citation type="journal article" date="2017" name="Genome Announc.">
        <title>Updated reference genome sequence and annotation of Mycobacterium bovis AF2122/97.</title>
        <authorList>
            <person name="Malone K.M."/>
            <person name="Farrell D."/>
            <person name="Stuber T.P."/>
            <person name="Schubert O.T."/>
            <person name="Aebersold R."/>
            <person name="Robbe-Austerman S."/>
            <person name="Gordon S.V."/>
        </authorList>
    </citation>
    <scope>NUCLEOTIDE SEQUENCE [LARGE SCALE GENOMIC DNA]</scope>
    <scope>GENOME REANNOTATION</scope>
    <source>
        <strain>ATCC BAA-935 / AF2122/97</strain>
    </source>
</reference>
<accession>P67666</accession>
<accession>A0A1R3XZU7</accession>
<accession>Q10872</accession>
<accession>X2BJS2</accession>